<dbReference type="EC" id="2.1.1.192" evidence="1"/>
<dbReference type="EMBL" id="CU207211">
    <property type="protein sequence ID" value="CAL61436.1"/>
    <property type="molecule type" value="Genomic_DNA"/>
</dbReference>
<dbReference type="SMR" id="A4G4J9"/>
<dbReference type="STRING" id="204773.HEAR1261"/>
<dbReference type="KEGG" id="har:HEAR1261"/>
<dbReference type="eggNOG" id="COG0820">
    <property type="taxonomic scope" value="Bacteria"/>
</dbReference>
<dbReference type="HOGENOM" id="CLU_029101_0_0_4"/>
<dbReference type="OrthoDB" id="9793973at2"/>
<dbReference type="Proteomes" id="UP000006697">
    <property type="component" value="Chromosome"/>
</dbReference>
<dbReference type="GO" id="GO:0005737">
    <property type="term" value="C:cytoplasm"/>
    <property type="evidence" value="ECO:0007669"/>
    <property type="project" value="UniProtKB-SubCell"/>
</dbReference>
<dbReference type="GO" id="GO:0051539">
    <property type="term" value="F:4 iron, 4 sulfur cluster binding"/>
    <property type="evidence" value="ECO:0007669"/>
    <property type="project" value="UniProtKB-UniRule"/>
</dbReference>
<dbReference type="GO" id="GO:0046872">
    <property type="term" value="F:metal ion binding"/>
    <property type="evidence" value="ECO:0007669"/>
    <property type="project" value="UniProtKB-KW"/>
</dbReference>
<dbReference type="GO" id="GO:0070040">
    <property type="term" value="F:rRNA (adenine(2503)-C2-)-methyltransferase activity"/>
    <property type="evidence" value="ECO:0007669"/>
    <property type="project" value="UniProtKB-UniRule"/>
</dbReference>
<dbReference type="GO" id="GO:0019843">
    <property type="term" value="F:rRNA binding"/>
    <property type="evidence" value="ECO:0007669"/>
    <property type="project" value="UniProtKB-UniRule"/>
</dbReference>
<dbReference type="GO" id="GO:0002935">
    <property type="term" value="F:tRNA (adenine(37)-C2)-methyltransferase activity"/>
    <property type="evidence" value="ECO:0007669"/>
    <property type="project" value="UniProtKB-UniRule"/>
</dbReference>
<dbReference type="GO" id="GO:0000049">
    <property type="term" value="F:tRNA binding"/>
    <property type="evidence" value="ECO:0007669"/>
    <property type="project" value="UniProtKB-UniRule"/>
</dbReference>
<dbReference type="GO" id="GO:0070475">
    <property type="term" value="P:rRNA base methylation"/>
    <property type="evidence" value="ECO:0007669"/>
    <property type="project" value="UniProtKB-UniRule"/>
</dbReference>
<dbReference type="GO" id="GO:0030488">
    <property type="term" value="P:tRNA methylation"/>
    <property type="evidence" value="ECO:0007669"/>
    <property type="project" value="UniProtKB-UniRule"/>
</dbReference>
<dbReference type="CDD" id="cd01335">
    <property type="entry name" value="Radical_SAM"/>
    <property type="match status" value="1"/>
</dbReference>
<dbReference type="FunFam" id="1.10.150.530:FF:000003">
    <property type="entry name" value="Dual-specificity RNA methyltransferase RlmN"/>
    <property type="match status" value="1"/>
</dbReference>
<dbReference type="FunFam" id="3.20.20.70:FF:000008">
    <property type="entry name" value="Dual-specificity RNA methyltransferase RlmN"/>
    <property type="match status" value="1"/>
</dbReference>
<dbReference type="Gene3D" id="1.10.150.530">
    <property type="match status" value="1"/>
</dbReference>
<dbReference type="Gene3D" id="3.20.20.70">
    <property type="entry name" value="Aldolase class I"/>
    <property type="match status" value="1"/>
</dbReference>
<dbReference type="HAMAP" id="MF_01849">
    <property type="entry name" value="RNA_methyltr_RlmN"/>
    <property type="match status" value="1"/>
</dbReference>
<dbReference type="InterPro" id="IPR013785">
    <property type="entry name" value="Aldolase_TIM"/>
</dbReference>
<dbReference type="InterPro" id="IPR040072">
    <property type="entry name" value="Methyltransferase_A"/>
</dbReference>
<dbReference type="InterPro" id="IPR048641">
    <property type="entry name" value="RlmN_N"/>
</dbReference>
<dbReference type="InterPro" id="IPR027492">
    <property type="entry name" value="RNA_MTrfase_RlmN"/>
</dbReference>
<dbReference type="InterPro" id="IPR004383">
    <property type="entry name" value="rRNA_lsu_MTrfase_RlmN/Cfr"/>
</dbReference>
<dbReference type="InterPro" id="IPR007197">
    <property type="entry name" value="rSAM"/>
</dbReference>
<dbReference type="NCBIfam" id="TIGR00048">
    <property type="entry name" value="rRNA_mod_RlmN"/>
    <property type="match status" value="1"/>
</dbReference>
<dbReference type="PANTHER" id="PTHR30544">
    <property type="entry name" value="23S RRNA METHYLTRANSFERASE"/>
    <property type="match status" value="1"/>
</dbReference>
<dbReference type="PANTHER" id="PTHR30544:SF5">
    <property type="entry name" value="RADICAL SAM CORE DOMAIN-CONTAINING PROTEIN"/>
    <property type="match status" value="1"/>
</dbReference>
<dbReference type="Pfam" id="PF04055">
    <property type="entry name" value="Radical_SAM"/>
    <property type="match status" value="1"/>
</dbReference>
<dbReference type="Pfam" id="PF21016">
    <property type="entry name" value="RlmN_N"/>
    <property type="match status" value="1"/>
</dbReference>
<dbReference type="PIRSF" id="PIRSF006004">
    <property type="entry name" value="CHP00048"/>
    <property type="match status" value="1"/>
</dbReference>
<dbReference type="SFLD" id="SFLDF00275">
    <property type="entry name" value="adenosine_C2_methyltransferase"/>
    <property type="match status" value="1"/>
</dbReference>
<dbReference type="SFLD" id="SFLDS00029">
    <property type="entry name" value="Radical_SAM"/>
    <property type="match status" value="1"/>
</dbReference>
<dbReference type="SUPFAM" id="SSF102114">
    <property type="entry name" value="Radical SAM enzymes"/>
    <property type="match status" value="1"/>
</dbReference>
<dbReference type="PROSITE" id="PS51918">
    <property type="entry name" value="RADICAL_SAM"/>
    <property type="match status" value="1"/>
</dbReference>
<gene>
    <name evidence="1" type="primary">rlmN</name>
    <name type="ordered locus">HEAR1261</name>
</gene>
<accession>A4G4J9</accession>
<keyword id="KW-0004">4Fe-4S</keyword>
<keyword id="KW-0963">Cytoplasm</keyword>
<keyword id="KW-1015">Disulfide bond</keyword>
<keyword id="KW-0408">Iron</keyword>
<keyword id="KW-0411">Iron-sulfur</keyword>
<keyword id="KW-0479">Metal-binding</keyword>
<keyword id="KW-0489">Methyltransferase</keyword>
<keyword id="KW-1185">Reference proteome</keyword>
<keyword id="KW-0698">rRNA processing</keyword>
<keyword id="KW-0949">S-adenosyl-L-methionine</keyword>
<keyword id="KW-0808">Transferase</keyword>
<keyword id="KW-0819">tRNA processing</keyword>
<comment type="function">
    <text evidence="1">Specifically methylates position 2 of adenine 2503 in 23S rRNA and position 2 of adenine 37 in tRNAs. m2A2503 modification seems to play a crucial role in the proofreading step occurring at the peptidyl transferase center and thus would serve to optimize ribosomal fidelity.</text>
</comment>
<comment type="catalytic activity">
    <reaction evidence="1">
        <text>adenosine(2503) in 23S rRNA + 2 reduced [2Fe-2S]-[ferredoxin] + 2 S-adenosyl-L-methionine = 2-methyladenosine(2503) in 23S rRNA + 5'-deoxyadenosine + L-methionine + 2 oxidized [2Fe-2S]-[ferredoxin] + S-adenosyl-L-homocysteine</text>
        <dbReference type="Rhea" id="RHEA:42916"/>
        <dbReference type="Rhea" id="RHEA-COMP:10000"/>
        <dbReference type="Rhea" id="RHEA-COMP:10001"/>
        <dbReference type="Rhea" id="RHEA-COMP:10152"/>
        <dbReference type="Rhea" id="RHEA-COMP:10282"/>
        <dbReference type="ChEBI" id="CHEBI:17319"/>
        <dbReference type="ChEBI" id="CHEBI:33737"/>
        <dbReference type="ChEBI" id="CHEBI:33738"/>
        <dbReference type="ChEBI" id="CHEBI:57844"/>
        <dbReference type="ChEBI" id="CHEBI:57856"/>
        <dbReference type="ChEBI" id="CHEBI:59789"/>
        <dbReference type="ChEBI" id="CHEBI:74411"/>
        <dbReference type="ChEBI" id="CHEBI:74497"/>
        <dbReference type="EC" id="2.1.1.192"/>
    </reaction>
</comment>
<comment type="catalytic activity">
    <reaction evidence="1">
        <text>adenosine(37) in tRNA + 2 reduced [2Fe-2S]-[ferredoxin] + 2 S-adenosyl-L-methionine = 2-methyladenosine(37) in tRNA + 5'-deoxyadenosine + L-methionine + 2 oxidized [2Fe-2S]-[ferredoxin] + S-adenosyl-L-homocysteine</text>
        <dbReference type="Rhea" id="RHEA:43332"/>
        <dbReference type="Rhea" id="RHEA-COMP:10000"/>
        <dbReference type="Rhea" id="RHEA-COMP:10001"/>
        <dbReference type="Rhea" id="RHEA-COMP:10162"/>
        <dbReference type="Rhea" id="RHEA-COMP:10485"/>
        <dbReference type="ChEBI" id="CHEBI:17319"/>
        <dbReference type="ChEBI" id="CHEBI:33737"/>
        <dbReference type="ChEBI" id="CHEBI:33738"/>
        <dbReference type="ChEBI" id="CHEBI:57844"/>
        <dbReference type="ChEBI" id="CHEBI:57856"/>
        <dbReference type="ChEBI" id="CHEBI:59789"/>
        <dbReference type="ChEBI" id="CHEBI:74411"/>
        <dbReference type="ChEBI" id="CHEBI:74497"/>
        <dbReference type="EC" id="2.1.1.192"/>
    </reaction>
</comment>
<comment type="cofactor">
    <cofactor evidence="1">
        <name>[4Fe-4S] cluster</name>
        <dbReference type="ChEBI" id="CHEBI:49883"/>
    </cofactor>
    <text evidence="1">Binds 1 [4Fe-4S] cluster. The cluster is coordinated with 3 cysteines and an exchangeable S-adenosyl-L-methionine.</text>
</comment>
<comment type="subcellular location">
    <subcellularLocation>
        <location evidence="1">Cytoplasm</location>
    </subcellularLocation>
</comment>
<comment type="miscellaneous">
    <text evidence="1">Reaction proceeds by a ping-pong mechanism involving intermediate methylation of a conserved cysteine residue.</text>
</comment>
<comment type="similarity">
    <text evidence="1">Belongs to the radical SAM superfamily. RlmN family.</text>
</comment>
<reference key="1">
    <citation type="journal article" date="2007" name="PLoS Genet.">
        <title>A tale of two oxidation states: bacterial colonization of arsenic-rich environments.</title>
        <authorList>
            <person name="Muller D."/>
            <person name="Medigue C."/>
            <person name="Koechler S."/>
            <person name="Barbe V."/>
            <person name="Barakat M."/>
            <person name="Talla E."/>
            <person name="Bonnefoy V."/>
            <person name="Krin E."/>
            <person name="Arsene-Ploetze F."/>
            <person name="Carapito C."/>
            <person name="Chandler M."/>
            <person name="Cournoyer B."/>
            <person name="Cruveiller S."/>
            <person name="Dossat C."/>
            <person name="Duval S."/>
            <person name="Heymann M."/>
            <person name="Leize E."/>
            <person name="Lieutaud A."/>
            <person name="Lievremont D."/>
            <person name="Makita Y."/>
            <person name="Mangenot S."/>
            <person name="Nitschke W."/>
            <person name="Ortet P."/>
            <person name="Perdrial N."/>
            <person name="Schoepp B."/>
            <person name="Siguier P."/>
            <person name="Simeonova D.D."/>
            <person name="Rouy Z."/>
            <person name="Segurens B."/>
            <person name="Turlin E."/>
            <person name="Vallenet D."/>
            <person name="van Dorsselaer A."/>
            <person name="Weiss S."/>
            <person name="Weissenbach J."/>
            <person name="Lett M.-C."/>
            <person name="Danchin A."/>
            <person name="Bertin P.N."/>
        </authorList>
    </citation>
    <scope>NUCLEOTIDE SEQUENCE [LARGE SCALE GENOMIC DNA]</scope>
    <source>
        <strain>ULPAs1</strain>
    </source>
</reference>
<name>RLMN_HERAR</name>
<proteinExistence type="inferred from homology"/>
<sequence>MTTTLTNLLDLDPAQLIAYCGELGEKPFRAKQLQRWIHQFGASDFDAMTDLAKSLRDKLKTRAMIAAPAVISDHTSSDGTRKWLIDVGQGNAVETVFIPEENRGTLCISTQAGCAVNCRFCSTGKQGFNRNLSVGEIIGQLWMAEFELRRTKGIEPGPKGERQITNVVMMGMGEPLLNYEPTVTALKLMLDDNAYGLSRRRVTLSTSGVVPMIDKLSQDCAVALAVSLHASNDALRDGLVPLNKKYPLQELMAACKRYLEFAPRDFVTFEYCMLDGVNDSDQHARELLTLVRDVPCKFNLIPFNPFPESGLTRSNNPRIKAFAQVLMDGGLVTTIRKTRGDDIDAACGQLAGEVQDRTRVQDRMKKMAEYQEKFGKNFGRIVEIPS</sequence>
<organism>
    <name type="scientific">Herminiimonas arsenicoxydans</name>
    <dbReference type="NCBI Taxonomy" id="204773"/>
    <lineage>
        <taxon>Bacteria</taxon>
        <taxon>Pseudomonadati</taxon>
        <taxon>Pseudomonadota</taxon>
        <taxon>Betaproteobacteria</taxon>
        <taxon>Burkholderiales</taxon>
        <taxon>Oxalobacteraceae</taxon>
        <taxon>Herminiimonas</taxon>
    </lineage>
</organism>
<protein>
    <recommendedName>
        <fullName evidence="1">Dual-specificity RNA methyltransferase RlmN</fullName>
        <ecNumber evidence="1">2.1.1.192</ecNumber>
    </recommendedName>
    <alternativeName>
        <fullName evidence="1">23S rRNA (adenine(2503)-C(2))-methyltransferase</fullName>
    </alternativeName>
    <alternativeName>
        <fullName evidence="1">23S rRNA m2A2503 methyltransferase</fullName>
    </alternativeName>
    <alternativeName>
        <fullName evidence="1">Ribosomal RNA large subunit methyltransferase N</fullName>
    </alternativeName>
    <alternativeName>
        <fullName evidence="1">tRNA (adenine(37)-C(2))-methyltransferase</fullName>
    </alternativeName>
    <alternativeName>
        <fullName evidence="1">tRNA m2A37 methyltransferase</fullName>
    </alternativeName>
</protein>
<feature type="chain" id="PRO_0000350213" description="Dual-specificity RNA methyltransferase RlmN">
    <location>
        <begin position="1"/>
        <end position="386"/>
    </location>
</feature>
<feature type="domain" description="Radical SAM core" evidence="2">
    <location>
        <begin position="100"/>
        <end position="341"/>
    </location>
</feature>
<feature type="active site" description="Proton acceptor" evidence="1">
    <location>
        <position position="94"/>
    </location>
</feature>
<feature type="active site" description="S-methylcysteine intermediate" evidence="1">
    <location>
        <position position="347"/>
    </location>
</feature>
<feature type="binding site" evidence="1">
    <location>
        <position position="114"/>
    </location>
    <ligand>
        <name>[4Fe-4S] cluster</name>
        <dbReference type="ChEBI" id="CHEBI:49883"/>
        <note>4Fe-4S-S-AdoMet</note>
    </ligand>
</feature>
<feature type="binding site" evidence="1">
    <location>
        <position position="118"/>
    </location>
    <ligand>
        <name>[4Fe-4S] cluster</name>
        <dbReference type="ChEBI" id="CHEBI:49883"/>
        <note>4Fe-4S-S-AdoMet</note>
    </ligand>
</feature>
<feature type="binding site" evidence="1">
    <location>
        <position position="121"/>
    </location>
    <ligand>
        <name>[4Fe-4S] cluster</name>
        <dbReference type="ChEBI" id="CHEBI:49883"/>
        <note>4Fe-4S-S-AdoMet</note>
    </ligand>
</feature>
<feature type="binding site" evidence="1">
    <location>
        <begin position="173"/>
        <end position="174"/>
    </location>
    <ligand>
        <name>S-adenosyl-L-methionine</name>
        <dbReference type="ChEBI" id="CHEBI:59789"/>
    </ligand>
</feature>
<feature type="binding site" evidence="1">
    <location>
        <position position="205"/>
    </location>
    <ligand>
        <name>S-adenosyl-L-methionine</name>
        <dbReference type="ChEBI" id="CHEBI:59789"/>
    </ligand>
</feature>
<feature type="binding site" evidence="1">
    <location>
        <begin position="227"/>
        <end position="229"/>
    </location>
    <ligand>
        <name>S-adenosyl-L-methionine</name>
        <dbReference type="ChEBI" id="CHEBI:59789"/>
    </ligand>
</feature>
<feature type="binding site" evidence="1">
    <location>
        <position position="304"/>
    </location>
    <ligand>
        <name>S-adenosyl-L-methionine</name>
        <dbReference type="ChEBI" id="CHEBI:59789"/>
    </ligand>
</feature>
<feature type="disulfide bond" description="(transient)" evidence="1">
    <location>
        <begin position="107"/>
        <end position="347"/>
    </location>
</feature>
<evidence type="ECO:0000255" key="1">
    <source>
        <dbReference type="HAMAP-Rule" id="MF_01849"/>
    </source>
</evidence>
<evidence type="ECO:0000255" key="2">
    <source>
        <dbReference type="PROSITE-ProRule" id="PRU01266"/>
    </source>
</evidence>